<evidence type="ECO:0000255" key="1">
    <source>
        <dbReference type="HAMAP-Rule" id="MF_00436"/>
    </source>
</evidence>
<evidence type="ECO:0000255" key="2">
    <source>
        <dbReference type="PROSITE-ProRule" id="PRU01346"/>
    </source>
</evidence>
<evidence type="ECO:0000256" key="3">
    <source>
        <dbReference type="SAM" id="MobiDB-lite"/>
    </source>
</evidence>
<reference key="1">
    <citation type="journal article" date="2005" name="Nucleic Acids Res.">
        <title>The genome sequence of Salmonella enterica serovar Choleraesuis, a highly invasive and resistant zoonotic pathogen.</title>
        <authorList>
            <person name="Chiu C.-H."/>
            <person name="Tang P."/>
            <person name="Chu C."/>
            <person name="Hu S."/>
            <person name="Bao Q."/>
            <person name="Yu J."/>
            <person name="Chou Y.-Y."/>
            <person name="Wang H.-S."/>
            <person name="Lee Y.-S."/>
        </authorList>
    </citation>
    <scope>NUCLEOTIDE SEQUENCE [LARGE SCALE GENOMIC DNA]</scope>
    <source>
        <strain>SC-B67</strain>
    </source>
</reference>
<keyword id="KW-0694">RNA-binding</keyword>
<keyword id="KW-0346">Stress response</keyword>
<feature type="chain" id="PRO_0000265185" description="RNA-binding protein Hfq">
    <location>
        <begin position="1"/>
        <end position="102"/>
    </location>
</feature>
<feature type="domain" description="Sm" evidence="2">
    <location>
        <begin position="9"/>
        <end position="68"/>
    </location>
</feature>
<feature type="region of interest" description="Disordered" evidence="3">
    <location>
        <begin position="63"/>
        <end position="102"/>
    </location>
</feature>
<feature type="compositionally biased region" description="Low complexity" evidence="3">
    <location>
        <begin position="70"/>
        <end position="88"/>
    </location>
</feature>
<organism>
    <name type="scientific">Salmonella choleraesuis (strain SC-B67)</name>
    <dbReference type="NCBI Taxonomy" id="321314"/>
    <lineage>
        <taxon>Bacteria</taxon>
        <taxon>Pseudomonadati</taxon>
        <taxon>Pseudomonadota</taxon>
        <taxon>Gammaproteobacteria</taxon>
        <taxon>Enterobacterales</taxon>
        <taxon>Enterobacteriaceae</taxon>
        <taxon>Salmonella</taxon>
    </lineage>
</organism>
<protein>
    <recommendedName>
        <fullName evidence="1">RNA-binding protein Hfq</fullName>
    </recommendedName>
</protein>
<accession>Q57GL9</accession>
<dbReference type="EMBL" id="AE017220">
    <property type="protein sequence ID" value="AAX68143.1"/>
    <property type="molecule type" value="Genomic_DNA"/>
</dbReference>
<dbReference type="RefSeq" id="WP_001051876.1">
    <property type="nucleotide sequence ID" value="NC_006905.1"/>
</dbReference>
<dbReference type="SMR" id="Q57GL9"/>
<dbReference type="KEGG" id="sec:SCH_4237"/>
<dbReference type="HOGENOM" id="CLU_113688_2_1_6"/>
<dbReference type="Proteomes" id="UP000000538">
    <property type="component" value="Chromosome"/>
</dbReference>
<dbReference type="GO" id="GO:0005829">
    <property type="term" value="C:cytosol"/>
    <property type="evidence" value="ECO:0007669"/>
    <property type="project" value="TreeGrafter"/>
</dbReference>
<dbReference type="GO" id="GO:0003723">
    <property type="term" value="F:RNA binding"/>
    <property type="evidence" value="ECO:0007669"/>
    <property type="project" value="UniProtKB-UniRule"/>
</dbReference>
<dbReference type="GO" id="GO:0006355">
    <property type="term" value="P:regulation of DNA-templated transcription"/>
    <property type="evidence" value="ECO:0007669"/>
    <property type="project" value="InterPro"/>
</dbReference>
<dbReference type="GO" id="GO:0043487">
    <property type="term" value="P:regulation of RNA stability"/>
    <property type="evidence" value="ECO:0007669"/>
    <property type="project" value="TreeGrafter"/>
</dbReference>
<dbReference type="GO" id="GO:0045974">
    <property type="term" value="P:regulation of translation, ncRNA-mediated"/>
    <property type="evidence" value="ECO:0007669"/>
    <property type="project" value="TreeGrafter"/>
</dbReference>
<dbReference type="CDD" id="cd01716">
    <property type="entry name" value="Hfq"/>
    <property type="match status" value="1"/>
</dbReference>
<dbReference type="FunFam" id="2.30.30.100:FF:000001">
    <property type="entry name" value="RNA-binding protein Hfq"/>
    <property type="match status" value="1"/>
</dbReference>
<dbReference type="Gene3D" id="2.30.30.100">
    <property type="match status" value="1"/>
</dbReference>
<dbReference type="HAMAP" id="MF_00436">
    <property type="entry name" value="Hfq"/>
    <property type="match status" value="1"/>
</dbReference>
<dbReference type="InterPro" id="IPR005001">
    <property type="entry name" value="Hfq"/>
</dbReference>
<dbReference type="InterPro" id="IPR010920">
    <property type="entry name" value="LSM_dom_sf"/>
</dbReference>
<dbReference type="InterPro" id="IPR047575">
    <property type="entry name" value="Sm"/>
</dbReference>
<dbReference type="NCBIfam" id="TIGR02383">
    <property type="entry name" value="Hfq"/>
    <property type="match status" value="1"/>
</dbReference>
<dbReference type="NCBIfam" id="NF001602">
    <property type="entry name" value="PRK00395.1"/>
    <property type="match status" value="1"/>
</dbReference>
<dbReference type="PANTHER" id="PTHR34772">
    <property type="entry name" value="RNA-BINDING PROTEIN HFQ"/>
    <property type="match status" value="1"/>
</dbReference>
<dbReference type="PANTHER" id="PTHR34772:SF1">
    <property type="entry name" value="RNA-BINDING PROTEIN HFQ"/>
    <property type="match status" value="1"/>
</dbReference>
<dbReference type="Pfam" id="PF17209">
    <property type="entry name" value="Hfq"/>
    <property type="match status" value="1"/>
</dbReference>
<dbReference type="SUPFAM" id="SSF50182">
    <property type="entry name" value="Sm-like ribonucleoproteins"/>
    <property type="match status" value="1"/>
</dbReference>
<dbReference type="PROSITE" id="PS52002">
    <property type="entry name" value="SM"/>
    <property type="match status" value="1"/>
</dbReference>
<name>HFQ_SALCH</name>
<comment type="function">
    <text evidence="1">RNA chaperone that binds small regulatory RNA (sRNAs) and mRNAs to facilitate mRNA translational regulation in response to envelope stress, environmental stress and changes in metabolite concentrations. Also binds with high specificity to tRNAs.</text>
</comment>
<comment type="subunit">
    <text evidence="1">Homohexamer.</text>
</comment>
<comment type="similarity">
    <text evidence="1">Belongs to the Hfq family.</text>
</comment>
<sequence>MAKGQSLQDPFLNALRRERVPVSIYLVNGIKLQGQIESFDQFVILLKNTVSQMVYKHAISTVVPSRPVSHHSNNAGGGASNNYHHGSNVQGSTAQQDSEETE</sequence>
<gene>
    <name evidence="1" type="primary">hfq</name>
    <name type="ordered locus">SCH_4237</name>
</gene>
<proteinExistence type="inferred from homology"/>